<feature type="chain" id="PRO_0000222785" description="Non-structural protein 4">
    <location>
        <begin position="1"/>
        <end position="727"/>
    </location>
</feature>
<feature type="region of interest" description="Disordered" evidence="1">
    <location>
        <begin position="1"/>
        <end position="38"/>
    </location>
</feature>
<feature type="region of interest" description="Disordered" evidence="1">
    <location>
        <begin position="671"/>
        <end position="727"/>
    </location>
</feature>
<feature type="compositionally biased region" description="Polar residues" evidence="1">
    <location>
        <begin position="17"/>
        <end position="38"/>
    </location>
</feature>
<feature type="compositionally biased region" description="Basic residues" evidence="1">
    <location>
        <begin position="712"/>
        <end position="727"/>
    </location>
</feature>
<dbReference type="EMBL" id="U36562">
    <property type="protein sequence ID" value="AAA88761.1"/>
    <property type="molecule type" value="mRNA"/>
</dbReference>
<dbReference type="PIR" id="A58457">
    <property type="entry name" value="A58457"/>
</dbReference>
<dbReference type="RefSeq" id="NP_620531.1">
    <property type="nucleotide sequence ID" value="NC_003761.1"/>
</dbReference>
<dbReference type="GeneID" id="956496"/>
<dbReference type="KEGG" id="vg:956496"/>
<dbReference type="Proteomes" id="UP000002239">
    <property type="component" value="Genome"/>
</dbReference>
<protein>
    <recommendedName>
        <fullName>Non-structural protein 4</fullName>
        <shortName>Pns4</shortName>
    </recommendedName>
</protein>
<proteinExistence type="evidence at transcript level"/>
<evidence type="ECO:0000256" key="1">
    <source>
        <dbReference type="SAM" id="MobiDB-lite"/>
    </source>
</evidence>
<accession>Q85436</accession>
<organism>
    <name type="scientific">Rice dwarf virus (isolate Fujian)</name>
    <name type="common">RDV</name>
    <dbReference type="NCBI Taxonomy" id="142804"/>
    <lineage>
        <taxon>Viruses</taxon>
        <taxon>Riboviria</taxon>
        <taxon>Orthornavirae</taxon>
        <taxon>Duplornaviricota</taxon>
        <taxon>Resentoviricetes</taxon>
        <taxon>Reovirales</taxon>
        <taxon>Sedoreoviridae</taxon>
        <taxon>Phytoreovirus</taxon>
        <taxon>Rice dwarf virus</taxon>
    </lineage>
</organism>
<reference key="1">
    <citation type="journal article" date="1996" name="Wei Sheng Wu Xue Bao">
        <title>Sequencing and functional analysis of the deduced protein of rice dwarf virus genome segment S4.</title>
        <authorList>
            <person name="Zhao X."/>
            <person name="Li Y."/>
            <person name="Liu Y."/>
            <person name="Lian X."/>
            <person name="Chen Z."/>
        </authorList>
    </citation>
    <scope>NUCLEOTIDE SEQUENCE [MRNA]</scope>
</reference>
<name>NSP4_RDVF</name>
<organismHost>
    <name type="scientific">Alopecurus aequalis</name>
    <dbReference type="NCBI Taxonomy" id="114194"/>
</organismHost>
<organismHost>
    <name type="scientific">Echinochloa crus-galli</name>
    <name type="common">Barnyard grass</name>
    <name type="synonym">Panicum crus-galli</name>
    <dbReference type="NCBI Taxonomy" id="90397"/>
</organismHost>
<organismHost>
    <name type="scientific">Nephotettix cincticeps</name>
    <name type="common">Green rice leafhopper</name>
    <name type="synonym">Selenocephalus cincticeps</name>
    <dbReference type="NCBI Taxonomy" id="94400"/>
</organismHost>
<organismHost>
    <name type="scientific">Oryza sativa</name>
    <name type="common">Rice</name>
    <dbReference type="NCBI Taxonomy" id="4530"/>
</organismHost>
<organismHost>
    <name type="scientific">Paspalum</name>
    <dbReference type="NCBI Taxonomy" id="147271"/>
</organismHost>
<keyword id="KW-1185">Reference proteome</keyword>
<sequence length="727" mass="79642">MNQSRSFVTGRGRDLSRTPSALSSNSETPGSMSSPSEGKTNAWVNSAYVSNFPALGQSQGLPSHKCSALALRSSQTTYIINFPRQHWNIMTFPNQSEAILATVASYAKDLDGKNSFAVFDTLKMPWSCRLGEKSCSGIDTLGHLADVHMHVLDPAEAEGKNLSDSETVYVYVTPPNLTDVKPTTIVLTECAANAKSANDLRQYIVTQLRKMPSLPFGCTTYAPGFLSDGVCKEHPNLFTSEELGAKIKVLTKLLIRCATSMSQDGSNAFCPKHPKVKIVHESNATSYILFNRPNGMVATNLILSDLPDDDCPTCWILKLAISEARYYALDGHHRCRSRIITPSVFRYLASIVIRVSMDSVLAPSDASSTDHAALVNMMCGIIQNTPAMRHVGISTGSEKVNNRSMRVIIMQENADRATQMSALYHLFLDYFGALNGWGFYFCSLTSLYGEFHGFSVGFSGEITHVNVASVIAKNWDTQSGIDNILEFKTITIPVHNEDIVCMVERTLAESFEVVINEHFNGASTIKVRRNGGDSRFNFTISNPRDAFLLLQKAVVDGGILQKILCRAMLKAIASLALRADREVQDVSFSFVLKMSLNPVNKSDPKSSELAHAAQMNSLPEFLASTPFTMQLGTLRDALLKKTGNVTVINMARTTEEVSNDALQEILKSIGGNSMTLDDPAEPLSDIESIPDPPPRSWASEDEAVNSPQTYSSRRKARKARAASKLSK</sequence>